<name>GHRB_SALPC</name>
<dbReference type="EC" id="1.1.1.79" evidence="1"/>
<dbReference type="EC" id="1.1.1.81" evidence="1"/>
<dbReference type="EMBL" id="CP000857">
    <property type="protein sequence ID" value="ACN47803.1"/>
    <property type="molecule type" value="Genomic_DNA"/>
</dbReference>
<dbReference type="RefSeq" id="WP_000804686.1">
    <property type="nucleotide sequence ID" value="NC_012125.1"/>
</dbReference>
<dbReference type="SMR" id="C0Q1A7"/>
<dbReference type="KEGG" id="sei:SPC_3725"/>
<dbReference type="HOGENOM" id="CLU_019796_1_2_6"/>
<dbReference type="Proteomes" id="UP000001599">
    <property type="component" value="Chromosome"/>
</dbReference>
<dbReference type="GO" id="GO:0005829">
    <property type="term" value="C:cytosol"/>
    <property type="evidence" value="ECO:0007669"/>
    <property type="project" value="TreeGrafter"/>
</dbReference>
<dbReference type="GO" id="GO:0005886">
    <property type="term" value="C:plasma membrane"/>
    <property type="evidence" value="ECO:0007669"/>
    <property type="project" value="UniProtKB-UniRule"/>
</dbReference>
<dbReference type="GO" id="GO:0030267">
    <property type="term" value="F:glyoxylate reductase (NADPH) activity"/>
    <property type="evidence" value="ECO:0007669"/>
    <property type="project" value="UniProtKB-UniRule"/>
</dbReference>
<dbReference type="GO" id="GO:0008465">
    <property type="term" value="F:hydroxypyruvate reductase (NADH) activity"/>
    <property type="evidence" value="ECO:0007669"/>
    <property type="project" value="RHEA"/>
</dbReference>
<dbReference type="GO" id="GO:0120509">
    <property type="term" value="F:hydroxypyruvate reductase (NADPH) activity"/>
    <property type="evidence" value="ECO:0007669"/>
    <property type="project" value="RHEA"/>
</dbReference>
<dbReference type="GO" id="GO:0051287">
    <property type="term" value="F:NAD binding"/>
    <property type="evidence" value="ECO:0007669"/>
    <property type="project" value="InterPro"/>
</dbReference>
<dbReference type="CDD" id="cd05301">
    <property type="entry name" value="GDH"/>
    <property type="match status" value="1"/>
</dbReference>
<dbReference type="FunFam" id="3.40.50.720:FF:000026">
    <property type="entry name" value="Glyoxylate/hydroxypyruvate reductase B"/>
    <property type="match status" value="1"/>
</dbReference>
<dbReference type="Gene3D" id="3.40.50.720">
    <property type="entry name" value="NAD(P)-binding Rossmann-like Domain"/>
    <property type="match status" value="2"/>
</dbReference>
<dbReference type="HAMAP" id="MF_01667">
    <property type="entry name" value="2_Hacid_dh_C_GhrB"/>
    <property type="match status" value="1"/>
</dbReference>
<dbReference type="InterPro" id="IPR050223">
    <property type="entry name" value="D-isomer_2-hydroxyacid_DH"/>
</dbReference>
<dbReference type="InterPro" id="IPR006139">
    <property type="entry name" value="D-isomer_2_OHA_DH_cat_dom"/>
</dbReference>
<dbReference type="InterPro" id="IPR029753">
    <property type="entry name" value="D-isomer_DH_CS"/>
</dbReference>
<dbReference type="InterPro" id="IPR006140">
    <property type="entry name" value="D-isomer_DH_NAD-bd"/>
</dbReference>
<dbReference type="InterPro" id="IPR023756">
    <property type="entry name" value="Glyo/OHPyrv_Rdtase_B"/>
</dbReference>
<dbReference type="InterPro" id="IPR036291">
    <property type="entry name" value="NAD(P)-bd_dom_sf"/>
</dbReference>
<dbReference type="NCBIfam" id="NF011938">
    <property type="entry name" value="PRK15409.1"/>
    <property type="match status" value="1"/>
</dbReference>
<dbReference type="PANTHER" id="PTHR10996">
    <property type="entry name" value="2-HYDROXYACID DEHYDROGENASE-RELATED"/>
    <property type="match status" value="1"/>
</dbReference>
<dbReference type="PANTHER" id="PTHR10996:SF283">
    <property type="entry name" value="GLYOXYLATE_HYDROXYPYRUVATE REDUCTASE B"/>
    <property type="match status" value="1"/>
</dbReference>
<dbReference type="Pfam" id="PF00389">
    <property type="entry name" value="2-Hacid_dh"/>
    <property type="match status" value="1"/>
</dbReference>
<dbReference type="Pfam" id="PF02826">
    <property type="entry name" value="2-Hacid_dh_C"/>
    <property type="match status" value="1"/>
</dbReference>
<dbReference type="SUPFAM" id="SSF52283">
    <property type="entry name" value="Formate/glycerate dehydrogenase catalytic domain-like"/>
    <property type="match status" value="1"/>
</dbReference>
<dbReference type="SUPFAM" id="SSF51735">
    <property type="entry name" value="NAD(P)-binding Rossmann-fold domains"/>
    <property type="match status" value="1"/>
</dbReference>
<dbReference type="PROSITE" id="PS00670">
    <property type="entry name" value="D_2_HYDROXYACID_DH_2"/>
    <property type="match status" value="1"/>
</dbReference>
<dbReference type="PROSITE" id="PS00671">
    <property type="entry name" value="D_2_HYDROXYACID_DH_3"/>
    <property type="match status" value="1"/>
</dbReference>
<keyword id="KW-0963">Cytoplasm</keyword>
<keyword id="KW-0520">NAD</keyword>
<keyword id="KW-0521">NADP</keyword>
<keyword id="KW-0560">Oxidoreductase</keyword>
<organism>
    <name type="scientific">Salmonella paratyphi C (strain RKS4594)</name>
    <dbReference type="NCBI Taxonomy" id="476213"/>
    <lineage>
        <taxon>Bacteria</taxon>
        <taxon>Pseudomonadati</taxon>
        <taxon>Pseudomonadota</taxon>
        <taxon>Gammaproteobacteria</taxon>
        <taxon>Enterobacterales</taxon>
        <taxon>Enterobacteriaceae</taxon>
        <taxon>Salmonella</taxon>
    </lineage>
</organism>
<comment type="function">
    <text evidence="1">Catalyzes the NADPH-dependent reduction of glyoxylate and hydroxypyruvate into glycolate and glycerate, respectively.</text>
</comment>
<comment type="catalytic activity">
    <reaction evidence="1">
        <text>glycolate + NADP(+) = glyoxylate + NADPH + H(+)</text>
        <dbReference type="Rhea" id="RHEA:10992"/>
        <dbReference type="ChEBI" id="CHEBI:15378"/>
        <dbReference type="ChEBI" id="CHEBI:29805"/>
        <dbReference type="ChEBI" id="CHEBI:36655"/>
        <dbReference type="ChEBI" id="CHEBI:57783"/>
        <dbReference type="ChEBI" id="CHEBI:58349"/>
        <dbReference type="EC" id="1.1.1.79"/>
    </reaction>
</comment>
<comment type="catalytic activity">
    <reaction evidence="1">
        <text>(R)-glycerate + NAD(+) = 3-hydroxypyruvate + NADH + H(+)</text>
        <dbReference type="Rhea" id="RHEA:17905"/>
        <dbReference type="ChEBI" id="CHEBI:15378"/>
        <dbReference type="ChEBI" id="CHEBI:16659"/>
        <dbReference type="ChEBI" id="CHEBI:17180"/>
        <dbReference type="ChEBI" id="CHEBI:57540"/>
        <dbReference type="ChEBI" id="CHEBI:57945"/>
        <dbReference type="EC" id="1.1.1.81"/>
    </reaction>
</comment>
<comment type="catalytic activity">
    <reaction evidence="1">
        <text>(R)-glycerate + NADP(+) = 3-hydroxypyruvate + NADPH + H(+)</text>
        <dbReference type="Rhea" id="RHEA:18657"/>
        <dbReference type="ChEBI" id="CHEBI:15378"/>
        <dbReference type="ChEBI" id="CHEBI:16659"/>
        <dbReference type="ChEBI" id="CHEBI:17180"/>
        <dbReference type="ChEBI" id="CHEBI:57783"/>
        <dbReference type="ChEBI" id="CHEBI:58349"/>
        <dbReference type="EC" id="1.1.1.81"/>
    </reaction>
</comment>
<comment type="subunit">
    <text evidence="1">Homodimer.</text>
</comment>
<comment type="subcellular location">
    <subcellularLocation>
        <location evidence="1">Cytoplasm</location>
    </subcellularLocation>
</comment>
<comment type="similarity">
    <text evidence="1">Belongs to the D-isomer specific 2-hydroxyacid dehydrogenase family. GhrB subfamily.</text>
</comment>
<gene>
    <name evidence="1" type="primary">ghrB</name>
    <name type="ordered locus">SPC_3725</name>
</gene>
<reference key="1">
    <citation type="journal article" date="2009" name="PLoS ONE">
        <title>Salmonella paratyphi C: genetic divergence from Salmonella choleraesuis and pathogenic convergence with Salmonella typhi.</title>
        <authorList>
            <person name="Liu W.-Q."/>
            <person name="Feng Y."/>
            <person name="Wang Y."/>
            <person name="Zou Q.-H."/>
            <person name="Chen F."/>
            <person name="Guo J.-T."/>
            <person name="Peng Y.-H."/>
            <person name="Jin Y."/>
            <person name="Li Y.-G."/>
            <person name="Hu S.-N."/>
            <person name="Johnston R.N."/>
            <person name="Liu G.-R."/>
            <person name="Liu S.-L."/>
        </authorList>
    </citation>
    <scope>NUCLEOTIDE SEQUENCE [LARGE SCALE GENOMIC DNA]</scope>
    <source>
        <strain>RKS4594</strain>
    </source>
</reference>
<evidence type="ECO:0000255" key="1">
    <source>
        <dbReference type="HAMAP-Rule" id="MF_01667"/>
    </source>
</evidence>
<sequence length="324" mass="35313">MKPSIILYKTLPDDLLHRLEAHFTVTQVPNLHPETVARHAQAFASAQGLLGASETVNRALLEKMPALRAASTISVGYDNVEVDALTARKIVLMHTPTVLTETVADTVMALMLATARRVVDVAERVKAGEWTESIGPAWFGVDVHHKTLGIVGMGRIGMALAQRAHFGFTMPVLYHARRRHQEAEDRFNARYCDLDTLLQEADFVCVILPLTAETRHLFGATQFARMKSSAIFINAGRGPVVDENALIAALQNGEIYAAGLDVFEQEPLSVDSPLLNMSNVVAVPHIGSATHETRYNMMACAVDNLIDALQGKIEKNCVNPQAAG</sequence>
<feature type="chain" id="PRO_1000187300" description="Glyoxylate/hydroxypyruvate reductase B">
    <location>
        <begin position="1"/>
        <end position="324"/>
    </location>
</feature>
<feature type="active site" evidence="1">
    <location>
        <position position="237"/>
    </location>
</feature>
<feature type="active site" evidence="1">
    <location>
        <position position="266"/>
    </location>
</feature>
<feature type="active site" description="Proton donor" evidence="1">
    <location>
        <position position="285"/>
    </location>
</feature>
<protein>
    <recommendedName>
        <fullName evidence="1">Glyoxylate/hydroxypyruvate reductase B</fullName>
        <ecNumber evidence="1">1.1.1.79</ecNumber>
        <ecNumber evidence="1">1.1.1.81</ecNumber>
    </recommendedName>
</protein>
<accession>C0Q1A7</accession>
<proteinExistence type="inferred from homology"/>